<keyword id="KW-0119">Carbohydrate metabolism</keyword>
<keyword id="KW-0325">Glycoprotein</keyword>
<keyword id="KW-0326">Glycosidase</keyword>
<keyword id="KW-0378">Hydrolase</keyword>
<keyword id="KW-0460">Magnesium</keyword>
<keyword id="KW-0520">NAD</keyword>
<keyword id="KW-0624">Polysaccharide degradation</keyword>
<keyword id="KW-1185">Reference proteome</keyword>
<keyword id="KW-0964">Secreted</keyword>
<accession>Q0CEF5</accession>
<organism>
    <name type="scientific">Aspergillus terreus (strain NIH 2624 / FGSC A1156)</name>
    <dbReference type="NCBI Taxonomy" id="341663"/>
    <lineage>
        <taxon>Eukaryota</taxon>
        <taxon>Fungi</taxon>
        <taxon>Dikarya</taxon>
        <taxon>Ascomycota</taxon>
        <taxon>Pezizomycotina</taxon>
        <taxon>Eurotiomycetes</taxon>
        <taxon>Eurotiomycetidae</taxon>
        <taxon>Eurotiales</taxon>
        <taxon>Aspergillaceae</taxon>
        <taxon>Aspergillus</taxon>
        <taxon>Aspergillus subgen. Circumdati</taxon>
    </lineage>
</organism>
<reference key="1">
    <citation type="submission" date="2005-09" db="EMBL/GenBank/DDBJ databases">
        <title>Annotation of the Aspergillus terreus NIH2624 genome.</title>
        <authorList>
            <person name="Birren B.W."/>
            <person name="Lander E.S."/>
            <person name="Galagan J.E."/>
            <person name="Nusbaum C."/>
            <person name="Devon K."/>
            <person name="Henn M."/>
            <person name="Ma L.-J."/>
            <person name="Jaffe D.B."/>
            <person name="Butler J."/>
            <person name="Alvarez P."/>
            <person name="Gnerre S."/>
            <person name="Grabherr M."/>
            <person name="Kleber M."/>
            <person name="Mauceli E.W."/>
            <person name="Brockman W."/>
            <person name="Rounsley S."/>
            <person name="Young S.K."/>
            <person name="LaButti K."/>
            <person name="Pushparaj V."/>
            <person name="DeCaprio D."/>
            <person name="Crawford M."/>
            <person name="Koehrsen M."/>
            <person name="Engels R."/>
            <person name="Montgomery P."/>
            <person name="Pearson M."/>
            <person name="Howarth C."/>
            <person name="Larson L."/>
            <person name="Luoma S."/>
            <person name="White J."/>
            <person name="Alvarado L."/>
            <person name="Kodira C.D."/>
            <person name="Zeng Q."/>
            <person name="Oleary S."/>
            <person name="Yandava C."/>
            <person name="Denning D.W."/>
            <person name="Nierman W.C."/>
            <person name="Milne T."/>
            <person name="Madden K."/>
        </authorList>
    </citation>
    <scope>NUCLEOTIDE SEQUENCE [LARGE SCALE GENOMIC DNA]</scope>
    <source>
        <strain>NIH 2624 / FGSC A1156</strain>
    </source>
</reference>
<dbReference type="EC" id="3.2.1.22"/>
<dbReference type="EMBL" id="CH476604">
    <property type="protein sequence ID" value="EAU32191.1"/>
    <property type="molecule type" value="Genomic_DNA"/>
</dbReference>
<dbReference type="RefSeq" id="XP_001216550.1">
    <property type="nucleotide sequence ID" value="XM_001216550.1"/>
</dbReference>
<dbReference type="SMR" id="Q0CEF5"/>
<dbReference type="STRING" id="341663.Q0CEF5"/>
<dbReference type="GlyCosmos" id="Q0CEF5">
    <property type="glycosylation" value="3 sites, No reported glycans"/>
</dbReference>
<dbReference type="EnsemblFungi" id="EAU32191">
    <property type="protein sequence ID" value="EAU32191"/>
    <property type="gene ID" value="ATEG_07929"/>
</dbReference>
<dbReference type="GeneID" id="4322588"/>
<dbReference type="VEuPathDB" id="FungiDB:ATEG_07929"/>
<dbReference type="eggNOG" id="ENOG502QWG1">
    <property type="taxonomic scope" value="Eukaryota"/>
</dbReference>
<dbReference type="HOGENOM" id="CLU_009640_2_1_1"/>
<dbReference type="OMA" id="IHPARVM"/>
<dbReference type="OrthoDB" id="5795902at2759"/>
<dbReference type="Proteomes" id="UP000007963">
    <property type="component" value="Unassembled WGS sequence"/>
</dbReference>
<dbReference type="GO" id="GO:0005576">
    <property type="term" value="C:extracellular region"/>
    <property type="evidence" value="ECO:0007669"/>
    <property type="project" value="UniProtKB-SubCell"/>
</dbReference>
<dbReference type="GO" id="GO:0004557">
    <property type="term" value="F:alpha-galactosidase activity"/>
    <property type="evidence" value="ECO:0007669"/>
    <property type="project" value="UniProtKB-EC"/>
</dbReference>
<dbReference type="GO" id="GO:0000272">
    <property type="term" value="P:polysaccharide catabolic process"/>
    <property type="evidence" value="ECO:0007669"/>
    <property type="project" value="UniProtKB-KW"/>
</dbReference>
<dbReference type="CDD" id="cd14791">
    <property type="entry name" value="GH36"/>
    <property type="match status" value="1"/>
</dbReference>
<dbReference type="FunFam" id="2.60.40.1180:FF:000028">
    <property type="entry name" value="Alpha-galactosidase"/>
    <property type="match status" value="1"/>
</dbReference>
<dbReference type="FunFam" id="3.20.20.70:FF:000118">
    <property type="entry name" value="Alpha-galactosidase"/>
    <property type="match status" value="1"/>
</dbReference>
<dbReference type="Gene3D" id="3.20.20.70">
    <property type="entry name" value="Aldolase class I"/>
    <property type="match status" value="1"/>
</dbReference>
<dbReference type="Gene3D" id="2.70.98.60">
    <property type="entry name" value="alpha-galactosidase from lactobacil brevis"/>
    <property type="match status" value="1"/>
</dbReference>
<dbReference type="Gene3D" id="2.60.40.1180">
    <property type="entry name" value="Golgi alpha-mannosidase II"/>
    <property type="match status" value="1"/>
</dbReference>
<dbReference type="InterPro" id="IPR013785">
    <property type="entry name" value="Aldolase_TIM"/>
</dbReference>
<dbReference type="InterPro" id="IPR038417">
    <property type="entry name" value="Alpga-gal_N_sf"/>
</dbReference>
<dbReference type="InterPro" id="IPR050985">
    <property type="entry name" value="Alpha-glycosidase_related"/>
</dbReference>
<dbReference type="InterPro" id="IPR002252">
    <property type="entry name" value="Glyco_hydro_36"/>
</dbReference>
<dbReference type="InterPro" id="IPR031705">
    <property type="entry name" value="Glyco_hydro_36_C"/>
</dbReference>
<dbReference type="InterPro" id="IPR031704">
    <property type="entry name" value="Glyco_hydro_36_N"/>
</dbReference>
<dbReference type="InterPro" id="IPR013780">
    <property type="entry name" value="Glyco_hydro_b"/>
</dbReference>
<dbReference type="InterPro" id="IPR017853">
    <property type="entry name" value="Glycoside_hydrolase_SF"/>
</dbReference>
<dbReference type="PANTHER" id="PTHR43053:SF3">
    <property type="entry name" value="ALPHA-GALACTOSIDASE C-RELATED"/>
    <property type="match status" value="1"/>
</dbReference>
<dbReference type="PANTHER" id="PTHR43053">
    <property type="entry name" value="GLYCOSIDASE FAMILY 31"/>
    <property type="match status" value="1"/>
</dbReference>
<dbReference type="Pfam" id="PF16874">
    <property type="entry name" value="Glyco_hydro_36C"/>
    <property type="match status" value="1"/>
</dbReference>
<dbReference type="Pfam" id="PF16875">
    <property type="entry name" value="Glyco_hydro_36N"/>
    <property type="match status" value="1"/>
</dbReference>
<dbReference type="Pfam" id="PF02065">
    <property type="entry name" value="Melibiase"/>
    <property type="match status" value="1"/>
</dbReference>
<dbReference type="PIRSF" id="PIRSF005536">
    <property type="entry name" value="Agal"/>
    <property type="match status" value="1"/>
</dbReference>
<dbReference type="PRINTS" id="PR00743">
    <property type="entry name" value="GLHYDRLASE36"/>
</dbReference>
<dbReference type="SUPFAM" id="SSF51445">
    <property type="entry name" value="(Trans)glycosidases"/>
    <property type="match status" value="1"/>
</dbReference>
<name>AGALG_ASPTN</name>
<proteinExistence type="inferred from homology"/>
<gene>
    <name type="primary">aglG</name>
    <name type="ORF">ATEG_07929</name>
</gene>
<protein>
    <recommendedName>
        <fullName>Probable alpha-galactosidase G</fullName>
        <ecNumber>3.2.1.22</ecNumber>
    </recommendedName>
    <alternativeName>
        <fullName>Melibiase G</fullName>
    </alternativeName>
</protein>
<comment type="function">
    <text evidence="1">Hydrolyzes a variety of simple alpha-D-galactoside as well as more complex molecules such as oligosaccharides and polysaccharides.</text>
</comment>
<comment type="catalytic activity">
    <reaction>
        <text>Hydrolysis of terminal, non-reducing alpha-D-galactose residues in alpha-D-galactosides, including galactose oligosaccharides, galactomannans and galactolipids.</text>
        <dbReference type="EC" id="3.2.1.22"/>
    </reaction>
</comment>
<comment type="cofactor">
    <cofactor evidence="1">
        <name>Mg(2+)</name>
        <dbReference type="ChEBI" id="CHEBI:18420"/>
    </cofactor>
</comment>
<comment type="cofactor">
    <cofactor evidence="1">
        <name>NAD(+)</name>
        <dbReference type="ChEBI" id="CHEBI:57540"/>
    </cofactor>
</comment>
<comment type="subunit">
    <text evidence="1">Homotetramer.</text>
</comment>
<comment type="subcellular location">
    <subcellularLocation>
        <location evidence="1">Secreted</location>
    </subcellularLocation>
</comment>
<comment type="similarity">
    <text evidence="4">Belongs to the glycosyl hydrolase 36 family.</text>
</comment>
<evidence type="ECO:0000250" key="1"/>
<evidence type="ECO:0000250" key="2">
    <source>
        <dbReference type="UniProtKB" id="Q9ALJ4"/>
    </source>
</evidence>
<evidence type="ECO:0000255" key="3"/>
<evidence type="ECO:0000305" key="4"/>
<sequence length="725" mass="80322">MTIENGIAKAIYVDGTKFVLNGRHVSYCFHVDDETGDLRTDHFGGRVTGAIPVDPSPVVDGWTGMPDRVRREFPDQGRGDFRIPALRIRQAEGHTVSALKYQSYTLLHGKPDLPGLPATFGTEKDVSTLVVHLRDEYSSVTADLIYSVFPEYNAIVRSVSITNNGFQPISIEALASFSTDLPYEDLEMISLRGDWAREAHRMRRKVEYGTQGFGSTTGFSSHLHNPFLALAHPSTTESQGEAWGFSLVYTGSFEVNVEKGSQGLTRAVLGFHPNQLSWPLSPGETLTSPECVAVYSNHGLGGMSRSLHRLFRDHLIKSKFATANRPVLLNSWEGLYFDIDETSMIRIAKESAALGVKLLVMDDGWFGKDYPRTSDAAGLGDWVPNPARFPNGLAPMVDQITSLKVANSSANLLFGIWVEPEMVNPDSALYREHPEWALHAGSYPRTEQRNQLVLNLALLEVQEFIINFMTDLLSSAKISYVKWDLNRGINETSAPKATHAYMLGMYKVFDTLTSRFPDVLWEGCAAGGGRFDPGILQYFPQIWTSDDSDAVERIFIQMGSSLAYPASAMGAHISAVPNHQTGRTTPLSLRAHVAMMGGSFGLELDPSQVSAEEKALIPELIALAEKVNPIVLTGDMWRLSLPEESNWPAVQFISQDQSQVVLFYFQLSPNVNHSMPRVRLQGLDEDAMYRVDGAGPYSGAMLMNLGLQYSFRTEYGSRVVFLEKQ</sequence>
<feature type="chain" id="PRO_0000395068" description="Probable alpha-galactosidase G">
    <location>
        <begin position="1"/>
        <end position="725"/>
    </location>
</feature>
<feature type="active site" description="Nucleophile" evidence="2">
    <location>
        <position position="484"/>
    </location>
</feature>
<feature type="active site" description="Proton donor" evidence="2">
    <location>
        <position position="546"/>
    </location>
</feature>
<feature type="glycosylation site" description="N-linked (GlcNAc...) asparagine" evidence="3">
    <location>
        <position position="407"/>
    </location>
</feature>
<feature type="glycosylation site" description="N-linked (GlcNAc...) asparagine" evidence="3">
    <location>
        <position position="490"/>
    </location>
</feature>
<feature type="glycosylation site" description="N-linked (GlcNAc...) asparagine" evidence="3">
    <location>
        <position position="672"/>
    </location>
</feature>